<protein>
    <recommendedName>
        <fullName>UDP-glycosyltransferase 91A1</fullName>
        <ecNumber>2.4.1.-</ecNumber>
    </recommendedName>
</protein>
<proteinExistence type="evidence at transcript level"/>
<keyword id="KW-0328">Glycosyltransferase</keyword>
<keyword id="KW-1185">Reference proteome</keyword>
<keyword id="KW-0808">Transferase</keyword>
<comment type="similarity">
    <text evidence="2">Belongs to the UDP-glycosyltransferase family.</text>
</comment>
<evidence type="ECO:0000250" key="1"/>
<evidence type="ECO:0000305" key="2"/>
<gene>
    <name type="primary">UGT91A1</name>
    <name type="ordered locus">At2g22590</name>
    <name type="ORF">T9I22.3</name>
</gene>
<sequence length="470" mass="53597">MTNFKDNDGDGTKLHVVMFPWLAFGHMVPYLELSKLIAQKGHKVSFISTPRNIDRLLPRLPENLSSVINFVKLSLPVGDNKLPEDGEATTDVPFELIPYLKIAYDGLKVPVTEFLESSKPDWVLQDFAGFWLPPISRRLGIKTGFFSAFNGATLGILKPPGFEEYRTSPADFMKPPKWVPFETSVAFKLFECRFIFKGFMAETTEGNVPDIHRVGGVIDGCDVIFVRSCYEYEAEWLGLTQELHRKPVIPVGVLPPKPDEKFEDTDTWLSVKKWLDSRKSKSIVYVAFGSEAKPSQTELNEIALGLELSGLPFFWVLKTRRGPWDTEPVELPEGFEERTADRGMVWRGWVEQLRTLSHDSIGLVLTHPGWGTIIEAIRFAKPMAMLVFVYDQGLNARVIEEKKIGYMIPRDETEGFFTKESVANSLRLVMVEEEGKVYRENVKEMKGVFGDMDRQDRYVDSFLEYLVTNR</sequence>
<feature type="chain" id="PRO_0000409141" description="UDP-glycosyltransferase 91A1">
    <location>
        <begin position="1"/>
        <end position="470"/>
    </location>
</feature>
<feature type="binding site" evidence="1">
    <location>
        <position position="290"/>
    </location>
    <ligand>
        <name>UDP-alpha-D-glucose</name>
        <dbReference type="ChEBI" id="CHEBI:58885"/>
    </ligand>
</feature>
<feature type="binding site" evidence="1">
    <location>
        <begin position="350"/>
        <end position="352"/>
    </location>
    <ligand>
        <name>UDP-alpha-D-glucose</name>
        <dbReference type="ChEBI" id="CHEBI:58885"/>
    </ligand>
</feature>
<feature type="binding site" evidence="1">
    <location>
        <begin position="367"/>
        <end position="375"/>
    </location>
    <ligand>
        <name>UDP-alpha-D-glucose</name>
        <dbReference type="ChEBI" id="CHEBI:58885"/>
    </ligand>
</feature>
<feature type="binding site" evidence="1">
    <location>
        <begin position="389"/>
        <end position="392"/>
    </location>
    <ligand>
        <name>UDP-alpha-D-glucose</name>
        <dbReference type="ChEBI" id="CHEBI:58885"/>
    </ligand>
</feature>
<feature type="sequence conflict" description="In Ref. 1; AAD15567." evidence="2" ref="1">
    <original>R</original>
    <variation>W</variation>
    <location>
        <position position="59"/>
    </location>
</feature>
<name>U91A1_ARATH</name>
<accession>Q940V3</accession>
<accession>Q9ZQ54</accession>
<reference key="1">
    <citation type="journal article" date="1999" name="Nature">
        <title>Sequence and analysis of chromosome 2 of the plant Arabidopsis thaliana.</title>
        <authorList>
            <person name="Lin X."/>
            <person name="Kaul S."/>
            <person name="Rounsley S.D."/>
            <person name="Shea T.P."/>
            <person name="Benito M.-I."/>
            <person name="Town C.D."/>
            <person name="Fujii C.Y."/>
            <person name="Mason T.M."/>
            <person name="Bowman C.L."/>
            <person name="Barnstead M.E."/>
            <person name="Feldblyum T.V."/>
            <person name="Buell C.R."/>
            <person name="Ketchum K.A."/>
            <person name="Lee J.J."/>
            <person name="Ronning C.M."/>
            <person name="Koo H.L."/>
            <person name="Moffat K.S."/>
            <person name="Cronin L.A."/>
            <person name="Shen M."/>
            <person name="Pai G."/>
            <person name="Van Aken S."/>
            <person name="Umayam L."/>
            <person name="Tallon L.J."/>
            <person name="Gill J.E."/>
            <person name="Adams M.D."/>
            <person name="Carrera A.J."/>
            <person name="Creasy T.H."/>
            <person name="Goodman H.M."/>
            <person name="Somerville C.R."/>
            <person name="Copenhaver G.P."/>
            <person name="Preuss D."/>
            <person name="Nierman W.C."/>
            <person name="White O."/>
            <person name="Eisen J.A."/>
            <person name="Salzberg S.L."/>
            <person name="Fraser C.M."/>
            <person name="Venter J.C."/>
        </authorList>
    </citation>
    <scope>NUCLEOTIDE SEQUENCE [LARGE SCALE GENOMIC DNA]</scope>
    <source>
        <strain>cv. Columbia</strain>
    </source>
</reference>
<reference key="2">
    <citation type="journal article" date="2017" name="Plant J.">
        <title>Araport11: a complete reannotation of the Arabidopsis thaliana reference genome.</title>
        <authorList>
            <person name="Cheng C.Y."/>
            <person name="Krishnakumar V."/>
            <person name="Chan A.P."/>
            <person name="Thibaud-Nissen F."/>
            <person name="Schobel S."/>
            <person name="Town C.D."/>
        </authorList>
    </citation>
    <scope>GENOME REANNOTATION</scope>
    <source>
        <strain>cv. Columbia</strain>
    </source>
</reference>
<reference key="3">
    <citation type="journal article" date="2003" name="Science">
        <title>Empirical analysis of transcriptional activity in the Arabidopsis genome.</title>
        <authorList>
            <person name="Yamada K."/>
            <person name="Lim J."/>
            <person name="Dale J.M."/>
            <person name="Chen H."/>
            <person name="Shinn P."/>
            <person name="Palm C.J."/>
            <person name="Southwick A.M."/>
            <person name="Wu H.C."/>
            <person name="Kim C.J."/>
            <person name="Nguyen M."/>
            <person name="Pham P.K."/>
            <person name="Cheuk R.F."/>
            <person name="Karlin-Newmann G."/>
            <person name="Liu S.X."/>
            <person name="Lam B."/>
            <person name="Sakano H."/>
            <person name="Wu T."/>
            <person name="Yu G."/>
            <person name="Miranda M."/>
            <person name="Quach H.L."/>
            <person name="Tripp M."/>
            <person name="Chang C.H."/>
            <person name="Lee J.M."/>
            <person name="Toriumi M.J."/>
            <person name="Chan M.M."/>
            <person name="Tang C.C."/>
            <person name="Onodera C.S."/>
            <person name="Deng J.M."/>
            <person name="Akiyama K."/>
            <person name="Ansari Y."/>
            <person name="Arakawa T."/>
            <person name="Banh J."/>
            <person name="Banno F."/>
            <person name="Bowser L."/>
            <person name="Brooks S.Y."/>
            <person name="Carninci P."/>
            <person name="Chao Q."/>
            <person name="Choy N."/>
            <person name="Enju A."/>
            <person name="Goldsmith A.D."/>
            <person name="Gurjal M."/>
            <person name="Hansen N.F."/>
            <person name="Hayashizaki Y."/>
            <person name="Johnson-Hopson C."/>
            <person name="Hsuan V.W."/>
            <person name="Iida K."/>
            <person name="Karnes M."/>
            <person name="Khan S."/>
            <person name="Koesema E."/>
            <person name="Ishida J."/>
            <person name="Jiang P.X."/>
            <person name="Jones T."/>
            <person name="Kawai J."/>
            <person name="Kamiya A."/>
            <person name="Meyers C."/>
            <person name="Nakajima M."/>
            <person name="Narusaka M."/>
            <person name="Seki M."/>
            <person name="Sakurai T."/>
            <person name="Satou M."/>
            <person name="Tamse R."/>
            <person name="Vaysberg M."/>
            <person name="Wallender E.K."/>
            <person name="Wong C."/>
            <person name="Yamamura Y."/>
            <person name="Yuan S."/>
            <person name="Shinozaki K."/>
            <person name="Davis R.W."/>
            <person name="Theologis A."/>
            <person name="Ecker J.R."/>
        </authorList>
    </citation>
    <scope>NUCLEOTIDE SEQUENCE [LARGE SCALE MRNA]</scope>
    <source>
        <strain>cv. Columbia</strain>
    </source>
</reference>
<reference key="4">
    <citation type="journal article" date="2001" name="J. Biol. Chem.">
        <title>Phylogenetic analysis of the UDP-glycosyltransferase multigene family of Arabidopsis thaliana.</title>
        <authorList>
            <person name="Li Y."/>
            <person name="Baldauf S."/>
            <person name="Lim E.K."/>
            <person name="Bowles D.J."/>
        </authorList>
    </citation>
    <scope>GENE FAMILY</scope>
</reference>
<organism>
    <name type="scientific">Arabidopsis thaliana</name>
    <name type="common">Mouse-ear cress</name>
    <dbReference type="NCBI Taxonomy" id="3702"/>
    <lineage>
        <taxon>Eukaryota</taxon>
        <taxon>Viridiplantae</taxon>
        <taxon>Streptophyta</taxon>
        <taxon>Embryophyta</taxon>
        <taxon>Tracheophyta</taxon>
        <taxon>Spermatophyta</taxon>
        <taxon>Magnoliopsida</taxon>
        <taxon>eudicotyledons</taxon>
        <taxon>Gunneridae</taxon>
        <taxon>Pentapetalae</taxon>
        <taxon>rosids</taxon>
        <taxon>malvids</taxon>
        <taxon>Brassicales</taxon>
        <taxon>Brassicaceae</taxon>
        <taxon>Camelineae</taxon>
        <taxon>Arabidopsis</taxon>
    </lineage>
</organism>
<dbReference type="EC" id="2.4.1.-"/>
<dbReference type="EMBL" id="AC006340">
    <property type="protein sequence ID" value="AAD15567.1"/>
    <property type="molecule type" value="Genomic_DNA"/>
</dbReference>
<dbReference type="EMBL" id="CP002685">
    <property type="protein sequence ID" value="AEC07325.1"/>
    <property type="molecule type" value="Genomic_DNA"/>
</dbReference>
<dbReference type="EMBL" id="AY052656">
    <property type="protein sequence ID" value="AAK96560.1"/>
    <property type="molecule type" value="mRNA"/>
</dbReference>
<dbReference type="EMBL" id="AY063726">
    <property type="protein sequence ID" value="AAL36076.1"/>
    <property type="molecule type" value="mRNA"/>
</dbReference>
<dbReference type="PIR" id="D84614">
    <property type="entry name" value="D84614"/>
</dbReference>
<dbReference type="RefSeq" id="NP_565540.4">
    <property type="nucleotide sequence ID" value="NM_127824.7"/>
</dbReference>
<dbReference type="SMR" id="Q940V3"/>
<dbReference type="FunCoup" id="Q940V3">
    <property type="interactions" value="10"/>
</dbReference>
<dbReference type="STRING" id="3702.Q940V3"/>
<dbReference type="CAZy" id="GT1">
    <property type="family name" value="Glycosyltransferase Family 1"/>
</dbReference>
<dbReference type="PaxDb" id="3702-AT2G22590.1"/>
<dbReference type="ProteomicsDB" id="228688"/>
<dbReference type="DNASU" id="816790"/>
<dbReference type="EnsemblPlants" id="AT2G22590.1">
    <property type="protein sequence ID" value="AT2G22590.1"/>
    <property type="gene ID" value="AT2G22590"/>
</dbReference>
<dbReference type="GeneID" id="816790"/>
<dbReference type="Gramene" id="AT2G22590.1">
    <property type="protein sequence ID" value="AT2G22590.1"/>
    <property type="gene ID" value="AT2G22590"/>
</dbReference>
<dbReference type="KEGG" id="ath:AT2G22590"/>
<dbReference type="Araport" id="AT2G22590"/>
<dbReference type="TAIR" id="AT2G22590"/>
<dbReference type="eggNOG" id="KOG1192">
    <property type="taxonomic scope" value="Eukaryota"/>
</dbReference>
<dbReference type="HOGENOM" id="CLU_001724_2_3_1"/>
<dbReference type="InParanoid" id="Q940V3"/>
<dbReference type="OMA" id="LWAYRAP"/>
<dbReference type="PhylomeDB" id="Q940V3"/>
<dbReference type="BioCyc" id="ARA:AT2G22590-MONOMER"/>
<dbReference type="PRO" id="PR:Q940V3"/>
<dbReference type="Proteomes" id="UP000006548">
    <property type="component" value="Chromosome 2"/>
</dbReference>
<dbReference type="ExpressionAtlas" id="Q940V3">
    <property type="expression patterns" value="baseline and differential"/>
</dbReference>
<dbReference type="GO" id="GO:0035251">
    <property type="term" value="F:UDP-glucosyltransferase activity"/>
    <property type="evidence" value="ECO:0007669"/>
    <property type="project" value="InterPro"/>
</dbReference>
<dbReference type="CDD" id="cd03784">
    <property type="entry name" value="GT1_Gtf-like"/>
    <property type="match status" value="1"/>
</dbReference>
<dbReference type="FunFam" id="3.40.50.2000:FF:000037">
    <property type="entry name" value="Glycosyltransferase"/>
    <property type="match status" value="1"/>
</dbReference>
<dbReference type="FunFam" id="3.40.50.2000:FF:000088">
    <property type="entry name" value="Glycosyltransferase"/>
    <property type="match status" value="1"/>
</dbReference>
<dbReference type="Gene3D" id="3.40.50.2000">
    <property type="entry name" value="Glycogen Phosphorylase B"/>
    <property type="match status" value="2"/>
</dbReference>
<dbReference type="InterPro" id="IPR050481">
    <property type="entry name" value="UDP-glycosyltransf_plant"/>
</dbReference>
<dbReference type="InterPro" id="IPR002213">
    <property type="entry name" value="UDP_glucos_trans"/>
</dbReference>
<dbReference type="PANTHER" id="PTHR48049">
    <property type="entry name" value="GLYCOSYLTRANSFERASE"/>
    <property type="match status" value="1"/>
</dbReference>
<dbReference type="PANTHER" id="PTHR48049:SF160">
    <property type="entry name" value="UDP-GLYCOSYLTRANSFERASE 91A1"/>
    <property type="match status" value="1"/>
</dbReference>
<dbReference type="Pfam" id="PF00201">
    <property type="entry name" value="UDPGT"/>
    <property type="match status" value="1"/>
</dbReference>
<dbReference type="SUPFAM" id="SSF53756">
    <property type="entry name" value="UDP-Glycosyltransferase/glycogen phosphorylase"/>
    <property type="match status" value="1"/>
</dbReference>